<protein>
    <recommendedName>
        <fullName>Putative sulfur carrier protein YedF</fullName>
    </recommendedName>
</protein>
<keyword id="KW-1185">Reference proteome</keyword>
<dbReference type="EMBL" id="L13280">
    <property type="protein sequence ID" value="AAA71973.1"/>
    <property type="molecule type" value="Unassigned_DNA"/>
</dbReference>
<dbReference type="EMBL" id="AE006468">
    <property type="protein sequence ID" value="AAL20878.1"/>
    <property type="molecule type" value="Genomic_DNA"/>
</dbReference>
<dbReference type="RefSeq" id="NP_460919.1">
    <property type="nucleotide sequence ID" value="NC_003197.2"/>
</dbReference>
<dbReference type="RefSeq" id="WP_000790504.1">
    <property type="nucleotide sequence ID" value="NC_003197.2"/>
</dbReference>
<dbReference type="BMRB" id="P0AA34"/>
<dbReference type="SMR" id="P0AA34"/>
<dbReference type="STRING" id="99287.STM1966"/>
<dbReference type="PaxDb" id="99287-STM1966"/>
<dbReference type="GeneID" id="1253487"/>
<dbReference type="GeneID" id="93775259"/>
<dbReference type="KEGG" id="stm:STM1966"/>
<dbReference type="PATRIC" id="fig|99287.12.peg.2082"/>
<dbReference type="HOGENOM" id="CLU_165255_0_0_6"/>
<dbReference type="OMA" id="PSEWRIL"/>
<dbReference type="PhylomeDB" id="P0AA34"/>
<dbReference type="BioCyc" id="SENT99287:STM1966-MONOMER"/>
<dbReference type="PHI-base" id="PHI:7643"/>
<dbReference type="PRO" id="PR:P0AA34"/>
<dbReference type="Proteomes" id="UP000001014">
    <property type="component" value="Chromosome"/>
</dbReference>
<dbReference type="CDD" id="cd03422">
    <property type="entry name" value="YedF"/>
    <property type="match status" value="1"/>
</dbReference>
<dbReference type="FunFam" id="3.30.110.40:FF:000001">
    <property type="entry name" value="SirA-like family protein"/>
    <property type="match status" value="1"/>
</dbReference>
<dbReference type="Gene3D" id="3.30.110.40">
    <property type="entry name" value="TusA-like domain"/>
    <property type="match status" value="1"/>
</dbReference>
<dbReference type="InterPro" id="IPR001455">
    <property type="entry name" value="TusA-like"/>
</dbReference>
<dbReference type="InterPro" id="IPR036868">
    <property type="entry name" value="TusA-like_sf"/>
</dbReference>
<dbReference type="InterPro" id="IPR049570">
    <property type="entry name" value="YedF"/>
</dbReference>
<dbReference type="NCBIfam" id="NF008242">
    <property type="entry name" value="PRK11018.1"/>
    <property type="match status" value="1"/>
</dbReference>
<dbReference type="PANTHER" id="PTHR33279">
    <property type="entry name" value="SULFUR CARRIER PROTEIN YEDF-RELATED"/>
    <property type="match status" value="1"/>
</dbReference>
<dbReference type="PANTHER" id="PTHR33279:SF6">
    <property type="entry name" value="SULFUR CARRIER PROTEIN YEDF-RELATED"/>
    <property type="match status" value="1"/>
</dbReference>
<dbReference type="Pfam" id="PF01206">
    <property type="entry name" value="TusA"/>
    <property type="match status" value="1"/>
</dbReference>
<dbReference type="SUPFAM" id="SSF64307">
    <property type="entry name" value="SirA-like"/>
    <property type="match status" value="1"/>
</dbReference>
<dbReference type="PROSITE" id="PS01148">
    <property type="entry name" value="UPF0033"/>
    <property type="match status" value="1"/>
</dbReference>
<name>YEDF_SALTY</name>
<comment type="similarity">
    <text evidence="2">Belongs to the sulfur carrier protein TusA family.</text>
</comment>
<organism>
    <name type="scientific">Salmonella typhimurium (strain LT2 / SGSC1412 / ATCC 700720)</name>
    <dbReference type="NCBI Taxonomy" id="99287"/>
    <lineage>
        <taxon>Bacteria</taxon>
        <taxon>Pseudomonadati</taxon>
        <taxon>Pseudomonadota</taxon>
        <taxon>Gammaproteobacteria</taxon>
        <taxon>Enterobacterales</taxon>
        <taxon>Enterobacteriaceae</taxon>
        <taxon>Salmonella</taxon>
    </lineage>
</organism>
<evidence type="ECO:0000250" key="1">
    <source>
        <dbReference type="UniProtKB" id="P0A890"/>
    </source>
</evidence>
<evidence type="ECO:0000305" key="2"/>
<feature type="chain" id="PRO_0000159066" description="Putative sulfur carrier protein YedF">
    <location>
        <begin position="1"/>
        <end position="77"/>
    </location>
</feature>
<feature type="active site" description="Cysteine persulfide intermediate" evidence="1">
    <location>
        <position position="17"/>
    </location>
</feature>
<proteinExistence type="inferred from homology"/>
<reference key="1">
    <citation type="journal article" date="1993" name="J. Gen. Microbiol.">
        <title>Organization of the Escherichia coli and Salmonella typhimurium chromosomes between flagellar regions IIIa and IIIb, including a large non-coding region.</title>
        <authorList>
            <person name="Raha M."/>
            <person name="Kihara M."/>
            <person name="Kawagishi I."/>
            <person name="Macnab R.M."/>
        </authorList>
    </citation>
    <scope>NUCLEOTIDE SEQUENCE [GENOMIC DNA]</scope>
</reference>
<reference key="2">
    <citation type="journal article" date="2001" name="Nature">
        <title>Complete genome sequence of Salmonella enterica serovar Typhimurium LT2.</title>
        <authorList>
            <person name="McClelland M."/>
            <person name="Sanderson K.E."/>
            <person name="Spieth J."/>
            <person name="Clifton S.W."/>
            <person name="Latreille P."/>
            <person name="Courtney L."/>
            <person name="Porwollik S."/>
            <person name="Ali J."/>
            <person name="Dante M."/>
            <person name="Du F."/>
            <person name="Hou S."/>
            <person name="Layman D."/>
            <person name="Leonard S."/>
            <person name="Nguyen C."/>
            <person name="Scott K."/>
            <person name="Holmes A."/>
            <person name="Grewal N."/>
            <person name="Mulvaney E."/>
            <person name="Ryan E."/>
            <person name="Sun H."/>
            <person name="Florea L."/>
            <person name="Miller W."/>
            <person name="Stoneking T."/>
            <person name="Nhan M."/>
            <person name="Waterston R."/>
            <person name="Wilson R.K."/>
        </authorList>
    </citation>
    <scope>NUCLEOTIDE SEQUENCE [LARGE SCALE GENOMIC DNA]</scope>
    <source>
        <strain>LT2 / SGSC1412 / ATCC 700720</strain>
    </source>
</reference>
<sequence length="77" mass="8639">MKNIVPDYRLDMVGEPCPYPAVATLEAMPQLKKGEILEVVSDCPQSINNIPLDARNHGYTVLDIQQDGPTIRYLIQK</sequence>
<gene>
    <name type="primary">yedF</name>
    <name type="ordered locus">STM1966</name>
</gene>
<accession>P0AA34</accession>
<accession>P31065</accession>